<sequence length="105" mass="12458">MQSPAMKRIKSSSHSRWDGSGSVNEMPFPSTIRLQGSFWECSTRRHMCYILRYLFRANGHRHFSYERLDCRNQTLRLPDHLYQPSRPHLLPHLSQLLLVRDSGYL</sequence>
<comment type="subcellular location">
    <subcellularLocation>
        <location evidence="2">Mitochondrion</location>
    </subcellularLocation>
</comment>
<comment type="miscellaneous">
    <text>A stretch of 270 kb of the mitochondrial genome is duplicated within the centromere of chromosome 2 resulting in the duplication of the gene. The expression of the duplicated gene is not demonstrated.</text>
</comment>
<keyword id="KW-0496">Mitochondrion</keyword>
<keyword id="KW-1185">Reference proteome</keyword>
<proteinExistence type="predicted"/>
<name>M1100_ARATH</name>
<organism>
    <name type="scientific">Arabidopsis thaliana</name>
    <name type="common">Mouse-ear cress</name>
    <dbReference type="NCBI Taxonomy" id="3702"/>
    <lineage>
        <taxon>Eukaryota</taxon>
        <taxon>Viridiplantae</taxon>
        <taxon>Streptophyta</taxon>
        <taxon>Embryophyta</taxon>
        <taxon>Tracheophyta</taxon>
        <taxon>Spermatophyta</taxon>
        <taxon>Magnoliopsida</taxon>
        <taxon>eudicotyledons</taxon>
        <taxon>Gunneridae</taxon>
        <taxon>Pentapetalae</taxon>
        <taxon>rosids</taxon>
        <taxon>malvids</taxon>
        <taxon>Brassicales</taxon>
        <taxon>Brassicaceae</taxon>
        <taxon>Camelineae</taxon>
        <taxon>Arabidopsis</taxon>
    </lineage>
</organism>
<gene>
    <name type="ordered locus">AtMg01100</name>
</gene>
<feature type="chain" id="PRO_0000196812" description="Uncharacterized mitochondrial protein AtMg01100">
    <location>
        <begin position="1"/>
        <end position="105"/>
    </location>
</feature>
<feature type="region of interest" description="Disordered" evidence="1">
    <location>
        <begin position="1"/>
        <end position="27"/>
    </location>
</feature>
<evidence type="ECO:0000256" key="1">
    <source>
        <dbReference type="SAM" id="MobiDB-lite"/>
    </source>
</evidence>
<evidence type="ECO:0000305" key="2"/>
<protein>
    <recommendedName>
        <fullName>Uncharacterized mitochondrial protein AtMg01100</fullName>
    </recommendedName>
    <alternativeName>
        <fullName>ORF105a</fullName>
    </alternativeName>
</protein>
<geneLocation type="mitochondrion"/>
<reference key="1">
    <citation type="journal article" date="1997" name="Nat. Genet.">
        <title>The mitochondrial genome of Arabidopsis thaliana contains 57 genes in 366,924 nucleotides.</title>
        <authorList>
            <person name="Unseld M."/>
            <person name="Marienfeld J.R."/>
            <person name="Brandt P."/>
            <person name="Brennicke A."/>
        </authorList>
    </citation>
    <scope>NUCLEOTIDE SEQUENCE [LARGE SCALE GENOMIC DNA]</scope>
    <source>
        <strain>cv. C24</strain>
    </source>
</reference>
<reference key="2">
    <citation type="journal article" date="2018" name="Plant Cell">
        <title>Correction of persistent errors in Arabidopsis reference mitochondrial genomes.</title>
        <authorList>
            <person name="Sloan D.B."/>
            <person name="Wu Z."/>
            <person name="Sharbrough J."/>
        </authorList>
    </citation>
    <scope>NUCLEOTIDE SEQUENCE [LARGE SCALE GENOMIC DNA]</scope>
    <source>
        <strain>cv. Columbia</strain>
    </source>
</reference>
<reference key="3">
    <citation type="journal article" date="1999" name="Nature">
        <title>Sequence and analysis of chromosome 2 of the plant Arabidopsis thaliana.</title>
        <authorList>
            <person name="Lin X."/>
            <person name="Kaul S."/>
            <person name="Rounsley S.D."/>
            <person name="Shea T.P."/>
            <person name="Benito M.-I."/>
            <person name="Town C.D."/>
            <person name="Fujii C.Y."/>
            <person name="Mason T.M."/>
            <person name="Bowman C.L."/>
            <person name="Barnstead M.E."/>
            <person name="Feldblyum T.V."/>
            <person name="Buell C.R."/>
            <person name="Ketchum K.A."/>
            <person name="Lee J.J."/>
            <person name="Ronning C.M."/>
            <person name="Koo H.L."/>
            <person name="Moffat K.S."/>
            <person name="Cronin L.A."/>
            <person name="Shen M."/>
            <person name="Pai G."/>
            <person name="Van Aken S."/>
            <person name="Umayam L."/>
            <person name="Tallon L.J."/>
            <person name="Gill J.E."/>
            <person name="Adams M.D."/>
            <person name="Carrera A.J."/>
            <person name="Creasy T.H."/>
            <person name="Goodman H.M."/>
            <person name="Somerville C.R."/>
            <person name="Copenhaver G.P."/>
            <person name="Preuss D."/>
            <person name="Nierman W.C."/>
            <person name="White O."/>
            <person name="Eisen J.A."/>
            <person name="Salzberg S.L."/>
            <person name="Fraser C.M."/>
            <person name="Venter J.C."/>
        </authorList>
    </citation>
    <scope>NUCLEOTIDE SEQUENCE [LARGE SCALE GENOMIC DNA]</scope>
    <source>
        <strain>cv. Columbia</strain>
    </source>
</reference>
<accession>P92542</accession>
<accession>Q1ZXX2</accession>
<dbReference type="EMBL" id="Y08501">
    <property type="protein sequence ID" value="CAA69795.1"/>
    <property type="molecule type" value="Genomic_DNA"/>
</dbReference>
<dbReference type="EMBL" id="BK010421">
    <property type="status" value="NOT_ANNOTATED_CDS"/>
    <property type="molecule type" value="Genomic_DNA"/>
</dbReference>
<dbReference type="EMBL" id="AC007730">
    <property type="status" value="NOT_ANNOTATED_CDS"/>
    <property type="molecule type" value="Genomic_DNA"/>
</dbReference>
<dbReference type="RefSeq" id="NP_085563.1">
    <property type="nucleotide sequence ID" value="NC_001284.2"/>
</dbReference>
<dbReference type="STRING" id="3702.P92542"/>
<dbReference type="PaxDb" id="3702-ATMG01100.1"/>
<dbReference type="EnsemblPlants" id="ATMG01100.1">
    <property type="protein sequence ID" value="ATMG01100.1"/>
    <property type="gene ID" value="ATMG01100"/>
</dbReference>
<dbReference type="Gramene" id="ATMG01100.1">
    <property type="protein sequence ID" value="ATMG01100.1"/>
    <property type="gene ID" value="ATMG01100"/>
</dbReference>
<dbReference type="Araport" id="ATMG01100"/>
<dbReference type="TAIR" id="ATMG01100">
    <property type="gene designation" value="ORF105A"/>
</dbReference>
<dbReference type="HOGENOM" id="CLU_2240312_0_0_1"/>
<dbReference type="InParanoid" id="P92542"/>
<dbReference type="PRO" id="PR:P92542"/>
<dbReference type="Proteomes" id="UP000006548">
    <property type="component" value="Mitochondrion MT"/>
</dbReference>
<dbReference type="GO" id="GO:0005739">
    <property type="term" value="C:mitochondrion"/>
    <property type="evidence" value="ECO:0007669"/>
    <property type="project" value="UniProtKB-SubCell"/>
</dbReference>